<organism>
    <name type="scientific">Oceanobacillus iheyensis (strain DSM 14371 / CIP 107618 / JCM 11309 / KCTC 3954 / HTE831)</name>
    <dbReference type="NCBI Taxonomy" id="221109"/>
    <lineage>
        <taxon>Bacteria</taxon>
        <taxon>Bacillati</taxon>
        <taxon>Bacillota</taxon>
        <taxon>Bacilli</taxon>
        <taxon>Bacillales</taxon>
        <taxon>Bacillaceae</taxon>
        <taxon>Oceanobacillus</taxon>
    </lineage>
</organism>
<comment type="function">
    <text evidence="1">Transaldolase is important for the balance of metabolites in the pentose-phosphate pathway.</text>
</comment>
<comment type="catalytic activity">
    <reaction evidence="1">
        <text>D-sedoheptulose 7-phosphate + D-glyceraldehyde 3-phosphate = D-erythrose 4-phosphate + beta-D-fructose 6-phosphate</text>
        <dbReference type="Rhea" id="RHEA:17053"/>
        <dbReference type="ChEBI" id="CHEBI:16897"/>
        <dbReference type="ChEBI" id="CHEBI:57483"/>
        <dbReference type="ChEBI" id="CHEBI:57634"/>
        <dbReference type="ChEBI" id="CHEBI:59776"/>
        <dbReference type="EC" id="2.2.1.2"/>
    </reaction>
</comment>
<comment type="pathway">
    <text evidence="1">Carbohydrate degradation; pentose phosphate pathway; D-glyceraldehyde 3-phosphate and beta-D-fructose 6-phosphate from D-ribose 5-phosphate and D-xylulose 5-phosphate (non-oxidative stage): step 2/3.</text>
</comment>
<comment type="subcellular location">
    <subcellularLocation>
        <location evidence="1">Cytoplasm</location>
    </subcellularLocation>
</comment>
<comment type="similarity">
    <text evidence="1">Belongs to the transaldolase family. Type 3B subfamily.</text>
</comment>
<accession>Q8CX76</accession>
<keyword id="KW-0963">Cytoplasm</keyword>
<keyword id="KW-0570">Pentose shunt</keyword>
<keyword id="KW-1185">Reference proteome</keyword>
<keyword id="KW-0704">Schiff base</keyword>
<keyword id="KW-0808">Transferase</keyword>
<gene>
    <name evidence="1" type="primary">tal</name>
    <name type="ordered locus">OB3004</name>
</gene>
<feature type="chain" id="PRO_0000173677" description="Probable transaldolase">
    <location>
        <begin position="1"/>
        <end position="213"/>
    </location>
</feature>
<feature type="active site" description="Schiff-base intermediate with substrate" evidence="1">
    <location>
        <position position="83"/>
    </location>
</feature>
<protein>
    <recommendedName>
        <fullName evidence="1">Probable transaldolase</fullName>
        <ecNumber evidence="1">2.2.1.2</ecNumber>
    </recommendedName>
</protein>
<evidence type="ECO:0000255" key="1">
    <source>
        <dbReference type="HAMAP-Rule" id="MF_00494"/>
    </source>
</evidence>
<proteinExistence type="inferred from homology"/>
<sequence>MKFFIDTANIDDIRAANSLGILAGVTTNPSLVAKEGVSFHDRLREITKEVSGSVSAEVISEDAEGMIEEGKELAAIAPNITVKVPMTLEGLKAVKVFSELNIKTNVTLIFNANQALLAARAGATYVSPFLGRLDDIGQDGMTLISAIAEIFDRHSVSTEIIAASIRHPLHVTDAALNGAHIATIPYKVLEQLVKHPLTDQGIQKFLDDWNSQK</sequence>
<name>TAL_OCEIH</name>
<reference key="1">
    <citation type="journal article" date="2002" name="Nucleic Acids Res.">
        <title>Genome sequence of Oceanobacillus iheyensis isolated from the Iheya Ridge and its unexpected adaptive capabilities to extreme environments.</title>
        <authorList>
            <person name="Takami H."/>
            <person name="Takaki Y."/>
            <person name="Uchiyama I."/>
        </authorList>
    </citation>
    <scope>NUCLEOTIDE SEQUENCE [LARGE SCALE GENOMIC DNA]</scope>
    <source>
        <strain>DSM 14371 / CIP 107618 / JCM 11309 / KCTC 3954 / HTE831</strain>
    </source>
</reference>
<dbReference type="EC" id="2.2.1.2" evidence="1"/>
<dbReference type="EMBL" id="BA000028">
    <property type="protein sequence ID" value="BAC14960.1"/>
    <property type="molecule type" value="Genomic_DNA"/>
</dbReference>
<dbReference type="RefSeq" id="WP_011067400.1">
    <property type="nucleotide sequence ID" value="NC_004193.1"/>
</dbReference>
<dbReference type="SMR" id="Q8CX76"/>
<dbReference type="STRING" id="221109.gene:10735256"/>
<dbReference type="KEGG" id="oih:OB3004"/>
<dbReference type="eggNOG" id="COG0176">
    <property type="taxonomic scope" value="Bacteria"/>
</dbReference>
<dbReference type="HOGENOM" id="CLU_079764_0_0_9"/>
<dbReference type="OrthoDB" id="9807051at2"/>
<dbReference type="PhylomeDB" id="Q8CX76"/>
<dbReference type="UniPathway" id="UPA00115">
    <property type="reaction ID" value="UER00414"/>
</dbReference>
<dbReference type="Proteomes" id="UP000000822">
    <property type="component" value="Chromosome"/>
</dbReference>
<dbReference type="GO" id="GO:0005737">
    <property type="term" value="C:cytoplasm"/>
    <property type="evidence" value="ECO:0007669"/>
    <property type="project" value="UniProtKB-SubCell"/>
</dbReference>
<dbReference type="GO" id="GO:0016832">
    <property type="term" value="F:aldehyde-lyase activity"/>
    <property type="evidence" value="ECO:0007669"/>
    <property type="project" value="InterPro"/>
</dbReference>
<dbReference type="GO" id="GO:0004801">
    <property type="term" value="F:transaldolase activity"/>
    <property type="evidence" value="ECO:0007669"/>
    <property type="project" value="UniProtKB-UniRule"/>
</dbReference>
<dbReference type="GO" id="GO:0005975">
    <property type="term" value="P:carbohydrate metabolic process"/>
    <property type="evidence" value="ECO:0007669"/>
    <property type="project" value="InterPro"/>
</dbReference>
<dbReference type="GO" id="GO:0006098">
    <property type="term" value="P:pentose-phosphate shunt"/>
    <property type="evidence" value="ECO:0007669"/>
    <property type="project" value="UniProtKB-UniRule"/>
</dbReference>
<dbReference type="CDD" id="cd00956">
    <property type="entry name" value="Transaldolase_FSA"/>
    <property type="match status" value="1"/>
</dbReference>
<dbReference type="FunFam" id="3.20.20.70:FF:000018">
    <property type="entry name" value="Probable transaldolase"/>
    <property type="match status" value="1"/>
</dbReference>
<dbReference type="Gene3D" id="3.20.20.70">
    <property type="entry name" value="Aldolase class I"/>
    <property type="match status" value="1"/>
</dbReference>
<dbReference type="HAMAP" id="MF_00494">
    <property type="entry name" value="Transaldolase_3b"/>
    <property type="match status" value="1"/>
</dbReference>
<dbReference type="InterPro" id="IPR013785">
    <property type="entry name" value="Aldolase_TIM"/>
</dbReference>
<dbReference type="InterPro" id="IPR001585">
    <property type="entry name" value="TAL/FSA"/>
</dbReference>
<dbReference type="InterPro" id="IPR022999">
    <property type="entry name" value="Transaldolase_3B"/>
</dbReference>
<dbReference type="InterPro" id="IPR004731">
    <property type="entry name" value="Transaldolase_3B/F6P_aldolase"/>
</dbReference>
<dbReference type="InterPro" id="IPR018225">
    <property type="entry name" value="Transaldolase_AS"/>
</dbReference>
<dbReference type="InterPro" id="IPR033919">
    <property type="entry name" value="TSA/FSA_arc/bac"/>
</dbReference>
<dbReference type="NCBIfam" id="TIGR00875">
    <property type="entry name" value="fsa_talC_mipB"/>
    <property type="match status" value="1"/>
</dbReference>
<dbReference type="PANTHER" id="PTHR10683">
    <property type="entry name" value="TRANSALDOLASE"/>
    <property type="match status" value="1"/>
</dbReference>
<dbReference type="PANTHER" id="PTHR10683:SF36">
    <property type="entry name" value="TRANSALDOLASE"/>
    <property type="match status" value="1"/>
</dbReference>
<dbReference type="Pfam" id="PF00923">
    <property type="entry name" value="TAL_FSA"/>
    <property type="match status" value="1"/>
</dbReference>
<dbReference type="SUPFAM" id="SSF51569">
    <property type="entry name" value="Aldolase"/>
    <property type="match status" value="1"/>
</dbReference>
<dbReference type="PROSITE" id="PS01054">
    <property type="entry name" value="TRANSALDOLASE_1"/>
    <property type="match status" value="1"/>
</dbReference>
<dbReference type="PROSITE" id="PS00958">
    <property type="entry name" value="TRANSALDOLASE_2"/>
    <property type="match status" value="1"/>
</dbReference>